<comment type="function">
    <text evidence="1">Catalyzes the transfer of the phosphoribosyl group of 5-phosphorylribose-1-pyrophosphate (PRPP) to anthranilate to yield N-(5'-phosphoribosyl)-anthranilate (PRA).</text>
</comment>
<comment type="catalytic activity">
    <reaction evidence="1">
        <text>N-(5-phospho-beta-D-ribosyl)anthranilate + diphosphate = 5-phospho-alpha-D-ribose 1-diphosphate + anthranilate</text>
        <dbReference type="Rhea" id="RHEA:11768"/>
        <dbReference type="ChEBI" id="CHEBI:16567"/>
        <dbReference type="ChEBI" id="CHEBI:18277"/>
        <dbReference type="ChEBI" id="CHEBI:33019"/>
        <dbReference type="ChEBI" id="CHEBI:58017"/>
        <dbReference type="EC" id="2.4.2.18"/>
    </reaction>
</comment>
<comment type="cofactor">
    <cofactor evidence="1">
        <name>Mg(2+)</name>
        <dbReference type="ChEBI" id="CHEBI:18420"/>
    </cofactor>
    <text evidence="1">Binds 2 magnesium ions per monomer.</text>
</comment>
<comment type="pathway">
    <text evidence="1">Amino-acid biosynthesis; L-tryptophan biosynthesis; L-tryptophan from chorismate: step 2/5.</text>
</comment>
<comment type="subunit">
    <text evidence="1">Homodimer.</text>
</comment>
<comment type="similarity">
    <text evidence="1">Belongs to the anthranilate phosphoribosyltransferase family.</text>
</comment>
<feature type="chain" id="PRO_1000198823" description="Anthranilate phosphoribosyltransferase">
    <location>
        <begin position="1"/>
        <end position="336"/>
    </location>
</feature>
<feature type="binding site" evidence="1">
    <location>
        <position position="79"/>
    </location>
    <ligand>
        <name>5-phospho-alpha-D-ribose 1-diphosphate</name>
        <dbReference type="ChEBI" id="CHEBI:58017"/>
    </ligand>
</feature>
<feature type="binding site" evidence="1">
    <location>
        <position position="79"/>
    </location>
    <ligand>
        <name>anthranilate</name>
        <dbReference type="ChEBI" id="CHEBI:16567"/>
        <label>1</label>
    </ligand>
</feature>
<feature type="binding site" evidence="1">
    <location>
        <begin position="82"/>
        <end position="83"/>
    </location>
    <ligand>
        <name>5-phospho-alpha-D-ribose 1-diphosphate</name>
        <dbReference type="ChEBI" id="CHEBI:58017"/>
    </ligand>
</feature>
<feature type="binding site" evidence="1">
    <location>
        <position position="87"/>
    </location>
    <ligand>
        <name>5-phospho-alpha-D-ribose 1-diphosphate</name>
        <dbReference type="ChEBI" id="CHEBI:58017"/>
    </ligand>
</feature>
<feature type="binding site" evidence="1">
    <location>
        <begin position="89"/>
        <end position="92"/>
    </location>
    <ligand>
        <name>5-phospho-alpha-D-ribose 1-diphosphate</name>
        <dbReference type="ChEBI" id="CHEBI:58017"/>
    </ligand>
</feature>
<feature type="binding site" evidence="1">
    <location>
        <position position="91"/>
    </location>
    <ligand>
        <name>Mg(2+)</name>
        <dbReference type="ChEBI" id="CHEBI:18420"/>
        <label>1</label>
    </ligand>
</feature>
<feature type="binding site" evidence="1">
    <location>
        <begin position="107"/>
        <end position="115"/>
    </location>
    <ligand>
        <name>5-phospho-alpha-D-ribose 1-diphosphate</name>
        <dbReference type="ChEBI" id="CHEBI:58017"/>
    </ligand>
</feature>
<feature type="binding site" evidence="1">
    <location>
        <position position="110"/>
    </location>
    <ligand>
        <name>anthranilate</name>
        <dbReference type="ChEBI" id="CHEBI:16567"/>
        <label>1</label>
    </ligand>
</feature>
<feature type="binding site" evidence="1">
    <location>
        <position position="119"/>
    </location>
    <ligand>
        <name>5-phospho-alpha-D-ribose 1-diphosphate</name>
        <dbReference type="ChEBI" id="CHEBI:58017"/>
    </ligand>
</feature>
<feature type="binding site" evidence="1">
    <location>
        <position position="165"/>
    </location>
    <ligand>
        <name>anthranilate</name>
        <dbReference type="ChEBI" id="CHEBI:16567"/>
        <label>2</label>
    </ligand>
</feature>
<feature type="binding site" evidence="1">
    <location>
        <position position="225"/>
    </location>
    <ligand>
        <name>Mg(2+)</name>
        <dbReference type="ChEBI" id="CHEBI:18420"/>
        <label>2</label>
    </ligand>
</feature>
<feature type="binding site" evidence="1">
    <location>
        <position position="226"/>
    </location>
    <ligand>
        <name>Mg(2+)</name>
        <dbReference type="ChEBI" id="CHEBI:18420"/>
        <label>1</label>
    </ligand>
</feature>
<feature type="binding site" evidence="1">
    <location>
        <position position="226"/>
    </location>
    <ligand>
        <name>Mg(2+)</name>
        <dbReference type="ChEBI" id="CHEBI:18420"/>
        <label>2</label>
    </ligand>
</feature>
<evidence type="ECO:0000255" key="1">
    <source>
        <dbReference type="HAMAP-Rule" id="MF_00211"/>
    </source>
</evidence>
<reference key="1">
    <citation type="journal article" date="2016" name="Front. Microbiol.">
        <title>The complete genome sequence of hyperthermophile Dictyoglomus turgidum DSM 6724 reveals a specialized carbohydrate fermentor.</title>
        <authorList>
            <person name="Brumm P.J."/>
            <person name="Gowda K."/>
            <person name="Robb F.T."/>
            <person name="Mead D.A."/>
        </authorList>
    </citation>
    <scope>NUCLEOTIDE SEQUENCE [LARGE SCALE GENOMIC DNA]</scope>
    <source>
        <strain>DSM 6724 / Z-1310</strain>
    </source>
</reference>
<name>TRPD_DICTD</name>
<protein>
    <recommendedName>
        <fullName evidence="1">Anthranilate phosphoribosyltransferase</fullName>
        <ecNumber evidence="1">2.4.2.18</ecNumber>
    </recommendedName>
</protein>
<organism>
    <name type="scientific">Dictyoglomus turgidum (strain DSM 6724 / Z-1310)</name>
    <dbReference type="NCBI Taxonomy" id="515635"/>
    <lineage>
        <taxon>Bacteria</taxon>
        <taxon>Pseudomonadati</taxon>
        <taxon>Dictyoglomota</taxon>
        <taxon>Dictyoglomia</taxon>
        <taxon>Dictyoglomales</taxon>
        <taxon>Dictyoglomaceae</taxon>
        <taxon>Dictyoglomus</taxon>
    </lineage>
</organism>
<gene>
    <name evidence="1" type="primary">trpD</name>
    <name type="ordered locus">Dtur_0692</name>
</gene>
<dbReference type="EC" id="2.4.2.18" evidence="1"/>
<dbReference type="EMBL" id="CP001251">
    <property type="protein sequence ID" value="ACK41977.1"/>
    <property type="molecule type" value="Genomic_DNA"/>
</dbReference>
<dbReference type="RefSeq" id="WP_012583062.1">
    <property type="nucleotide sequence ID" value="NC_011661.1"/>
</dbReference>
<dbReference type="RefSeq" id="YP_002352591.1">
    <property type="nucleotide sequence ID" value="NC_011661.1"/>
</dbReference>
<dbReference type="SMR" id="B8DZP4"/>
<dbReference type="FunCoup" id="B8DZP4">
    <property type="interactions" value="336"/>
</dbReference>
<dbReference type="STRING" id="515635.Dtur_0692"/>
<dbReference type="EnsemblBacteria" id="ACK41977">
    <property type="protein sequence ID" value="ACK41977"/>
    <property type="gene ID" value="Dtur_0692"/>
</dbReference>
<dbReference type="KEGG" id="dtu:Dtur_0692"/>
<dbReference type="PATRIC" id="fig|515635.4.peg.730"/>
<dbReference type="eggNOG" id="COG0547">
    <property type="taxonomic scope" value="Bacteria"/>
</dbReference>
<dbReference type="HOGENOM" id="CLU_034315_2_1_0"/>
<dbReference type="InParanoid" id="B8DZP4"/>
<dbReference type="OrthoDB" id="9806430at2"/>
<dbReference type="UniPathway" id="UPA00035">
    <property type="reaction ID" value="UER00041"/>
</dbReference>
<dbReference type="Proteomes" id="UP000007719">
    <property type="component" value="Chromosome"/>
</dbReference>
<dbReference type="GO" id="GO:0005829">
    <property type="term" value="C:cytosol"/>
    <property type="evidence" value="ECO:0000318"/>
    <property type="project" value="GO_Central"/>
</dbReference>
<dbReference type="GO" id="GO:0004048">
    <property type="term" value="F:anthranilate phosphoribosyltransferase activity"/>
    <property type="evidence" value="ECO:0007669"/>
    <property type="project" value="UniProtKB-UniRule"/>
</dbReference>
<dbReference type="GO" id="GO:0000287">
    <property type="term" value="F:magnesium ion binding"/>
    <property type="evidence" value="ECO:0007669"/>
    <property type="project" value="UniProtKB-UniRule"/>
</dbReference>
<dbReference type="GO" id="GO:0000162">
    <property type="term" value="P:L-tryptophan biosynthetic process"/>
    <property type="evidence" value="ECO:0000318"/>
    <property type="project" value="GO_Central"/>
</dbReference>
<dbReference type="FunFam" id="3.40.1030.10:FF:000002">
    <property type="entry name" value="Anthranilate phosphoribosyltransferase"/>
    <property type="match status" value="1"/>
</dbReference>
<dbReference type="Gene3D" id="3.40.1030.10">
    <property type="entry name" value="Nucleoside phosphorylase/phosphoribosyltransferase catalytic domain"/>
    <property type="match status" value="1"/>
</dbReference>
<dbReference type="Gene3D" id="1.20.970.10">
    <property type="entry name" value="Transferase, Pyrimidine Nucleoside Phosphorylase, Chain C"/>
    <property type="match status" value="1"/>
</dbReference>
<dbReference type="HAMAP" id="MF_00211">
    <property type="entry name" value="TrpD"/>
    <property type="match status" value="1"/>
</dbReference>
<dbReference type="InterPro" id="IPR005940">
    <property type="entry name" value="Anthranilate_Pribosyl_Tfrase"/>
</dbReference>
<dbReference type="InterPro" id="IPR000312">
    <property type="entry name" value="Glycosyl_Trfase_fam3"/>
</dbReference>
<dbReference type="InterPro" id="IPR017459">
    <property type="entry name" value="Glycosyl_Trfase_fam3_N_dom"/>
</dbReference>
<dbReference type="InterPro" id="IPR036320">
    <property type="entry name" value="Glycosyl_Trfase_fam3_N_dom_sf"/>
</dbReference>
<dbReference type="InterPro" id="IPR035902">
    <property type="entry name" value="Nuc_phospho_transferase"/>
</dbReference>
<dbReference type="NCBIfam" id="TIGR01245">
    <property type="entry name" value="trpD"/>
    <property type="match status" value="1"/>
</dbReference>
<dbReference type="PANTHER" id="PTHR43285">
    <property type="entry name" value="ANTHRANILATE PHOSPHORIBOSYLTRANSFERASE"/>
    <property type="match status" value="1"/>
</dbReference>
<dbReference type="PANTHER" id="PTHR43285:SF2">
    <property type="entry name" value="ANTHRANILATE PHOSPHORIBOSYLTRANSFERASE"/>
    <property type="match status" value="1"/>
</dbReference>
<dbReference type="Pfam" id="PF02885">
    <property type="entry name" value="Glycos_trans_3N"/>
    <property type="match status" value="1"/>
</dbReference>
<dbReference type="Pfam" id="PF00591">
    <property type="entry name" value="Glycos_transf_3"/>
    <property type="match status" value="1"/>
</dbReference>
<dbReference type="SUPFAM" id="SSF52418">
    <property type="entry name" value="Nucleoside phosphorylase/phosphoribosyltransferase catalytic domain"/>
    <property type="match status" value="1"/>
</dbReference>
<dbReference type="SUPFAM" id="SSF47648">
    <property type="entry name" value="Nucleoside phosphorylase/phosphoribosyltransferase N-terminal domain"/>
    <property type="match status" value="1"/>
</dbReference>
<proteinExistence type="inferred from homology"/>
<keyword id="KW-0028">Amino-acid biosynthesis</keyword>
<keyword id="KW-0057">Aromatic amino acid biosynthesis</keyword>
<keyword id="KW-0328">Glycosyltransferase</keyword>
<keyword id="KW-0460">Magnesium</keyword>
<keyword id="KW-0479">Metal-binding</keyword>
<keyword id="KW-1185">Reference proteome</keyword>
<keyword id="KW-0808">Transferase</keyword>
<keyword id="KW-0822">Tryptophan biosynthesis</keyword>
<accession>B8DZP4</accession>
<sequence length="336" mass="36993">MVKEFLKKISEGKHLNFEEAREIVLSIDREEITEAQLGAILLGLRLKGENPEEIAGFVDVLHEKAKKVPNKTPAIDVCGTGGDKSNTFNISTAVAFTLASLGIKVAKHGNRAMSSKAGSIDVIEALGFKCSDNPEEIAKDIDDKGIGIIFAPYFHPVVGKAVKVRRELGIGTIFNMAGPMLNPANLSGQILGVYSEKVMHRMAEASLILKKDNILFYHGKDDGIDEISLSGKTVFAYLKNSKIDYFEFSPEDIGVKRYQREDFNGGDAQENAKILENIFKGRAKEAHIDIVAVNSAFALWVLGKVKEVKEGFDMVKDHIMKGKVYEYIETLRGKTA</sequence>